<feature type="chain" id="PRO_0000270303" description="Methionine import ATP-binding protein MetN">
    <location>
        <begin position="1"/>
        <end position="350"/>
    </location>
</feature>
<feature type="domain" description="ABC transporter" evidence="1">
    <location>
        <begin position="2"/>
        <end position="241"/>
    </location>
</feature>
<feature type="binding site" evidence="1">
    <location>
        <begin position="38"/>
        <end position="45"/>
    </location>
    <ligand>
        <name>ATP</name>
        <dbReference type="ChEBI" id="CHEBI:30616"/>
    </ligand>
</feature>
<evidence type="ECO:0000255" key="1">
    <source>
        <dbReference type="HAMAP-Rule" id="MF_01719"/>
    </source>
</evidence>
<evidence type="ECO:0000305" key="2"/>
<keyword id="KW-0029">Amino-acid transport</keyword>
<keyword id="KW-0067">ATP-binding</keyword>
<keyword id="KW-0997">Cell inner membrane</keyword>
<keyword id="KW-1003">Cell membrane</keyword>
<keyword id="KW-0472">Membrane</keyword>
<keyword id="KW-0547">Nucleotide-binding</keyword>
<keyword id="KW-1278">Translocase</keyword>
<keyword id="KW-0813">Transport</keyword>
<comment type="function">
    <text evidence="1">Part of the ABC transporter complex MetNIQ involved in methionine import. Responsible for energy coupling to the transport system.</text>
</comment>
<comment type="catalytic activity">
    <reaction evidence="1">
        <text>L-methionine(out) + ATP + H2O = L-methionine(in) + ADP + phosphate + H(+)</text>
        <dbReference type="Rhea" id="RHEA:29779"/>
        <dbReference type="ChEBI" id="CHEBI:15377"/>
        <dbReference type="ChEBI" id="CHEBI:15378"/>
        <dbReference type="ChEBI" id="CHEBI:30616"/>
        <dbReference type="ChEBI" id="CHEBI:43474"/>
        <dbReference type="ChEBI" id="CHEBI:57844"/>
        <dbReference type="ChEBI" id="CHEBI:456216"/>
        <dbReference type="EC" id="7.4.2.11"/>
    </reaction>
</comment>
<comment type="catalytic activity">
    <reaction evidence="1">
        <text>D-methionine(out) + ATP + H2O = D-methionine(in) + ADP + phosphate + H(+)</text>
        <dbReference type="Rhea" id="RHEA:29767"/>
        <dbReference type="ChEBI" id="CHEBI:15377"/>
        <dbReference type="ChEBI" id="CHEBI:15378"/>
        <dbReference type="ChEBI" id="CHEBI:30616"/>
        <dbReference type="ChEBI" id="CHEBI:43474"/>
        <dbReference type="ChEBI" id="CHEBI:57932"/>
        <dbReference type="ChEBI" id="CHEBI:456216"/>
        <dbReference type="EC" id="7.4.2.11"/>
    </reaction>
</comment>
<comment type="subunit">
    <text evidence="1">The complex is composed of two ATP-binding proteins (MetN), two transmembrane proteins (MetI) and a solute-binding protein (MetQ).</text>
</comment>
<comment type="subcellular location">
    <subcellularLocation>
        <location evidence="1">Cell inner membrane</location>
        <topology evidence="1">Peripheral membrane protein</topology>
    </subcellularLocation>
</comment>
<comment type="similarity">
    <text evidence="1">Belongs to the ABC transporter superfamily. Methionine importer (TC 3.A.1.24) family.</text>
</comment>
<comment type="sequence caution" evidence="2">
    <conflict type="erroneous initiation">
        <sequence resource="EMBL-CDS" id="CAL09140"/>
    </conflict>
</comment>
<name>METN_FRAT1</name>
<accession>Q14H97</accession>
<dbReference type="EC" id="7.4.2.11" evidence="1"/>
<dbReference type="EMBL" id="AM286280">
    <property type="protein sequence ID" value="CAL09140.1"/>
    <property type="status" value="ALT_INIT"/>
    <property type="molecule type" value="Genomic_DNA"/>
</dbReference>
<dbReference type="RefSeq" id="WP_043023508.1">
    <property type="nucleotide sequence ID" value="NC_008245.1"/>
</dbReference>
<dbReference type="SMR" id="Q14H97"/>
<dbReference type="KEGG" id="ftf:FTF1124"/>
<dbReference type="HOGENOM" id="CLU_000604_1_3_6"/>
<dbReference type="GO" id="GO:0005886">
    <property type="term" value="C:plasma membrane"/>
    <property type="evidence" value="ECO:0007669"/>
    <property type="project" value="UniProtKB-SubCell"/>
</dbReference>
<dbReference type="GO" id="GO:0033232">
    <property type="term" value="F:ABC-type D-methionine transporter activity"/>
    <property type="evidence" value="ECO:0007669"/>
    <property type="project" value="UniProtKB-EC"/>
</dbReference>
<dbReference type="GO" id="GO:0005524">
    <property type="term" value="F:ATP binding"/>
    <property type="evidence" value="ECO:0007669"/>
    <property type="project" value="UniProtKB-KW"/>
</dbReference>
<dbReference type="GO" id="GO:0016887">
    <property type="term" value="F:ATP hydrolysis activity"/>
    <property type="evidence" value="ECO:0007669"/>
    <property type="project" value="InterPro"/>
</dbReference>
<dbReference type="CDD" id="cd03258">
    <property type="entry name" value="ABC_MetN_methionine_transporter"/>
    <property type="match status" value="1"/>
</dbReference>
<dbReference type="FunFam" id="3.40.50.300:FF:000056">
    <property type="entry name" value="Cell division ATP-binding protein FtsE"/>
    <property type="match status" value="1"/>
</dbReference>
<dbReference type="Gene3D" id="3.30.70.260">
    <property type="match status" value="1"/>
</dbReference>
<dbReference type="Gene3D" id="3.40.50.300">
    <property type="entry name" value="P-loop containing nucleotide triphosphate hydrolases"/>
    <property type="match status" value="1"/>
</dbReference>
<dbReference type="InterPro" id="IPR003593">
    <property type="entry name" value="AAA+_ATPase"/>
</dbReference>
<dbReference type="InterPro" id="IPR003439">
    <property type="entry name" value="ABC_transporter-like_ATP-bd"/>
</dbReference>
<dbReference type="InterPro" id="IPR017871">
    <property type="entry name" value="ABC_transporter-like_CS"/>
</dbReference>
<dbReference type="InterPro" id="IPR045865">
    <property type="entry name" value="ACT-like_dom_sf"/>
</dbReference>
<dbReference type="InterPro" id="IPR041701">
    <property type="entry name" value="MetN_ABC"/>
</dbReference>
<dbReference type="InterPro" id="IPR050086">
    <property type="entry name" value="MetN_ABC_transporter-like"/>
</dbReference>
<dbReference type="InterPro" id="IPR018449">
    <property type="entry name" value="NIL_domain"/>
</dbReference>
<dbReference type="InterPro" id="IPR027417">
    <property type="entry name" value="P-loop_NTPase"/>
</dbReference>
<dbReference type="PANTHER" id="PTHR43166">
    <property type="entry name" value="AMINO ACID IMPORT ATP-BINDING PROTEIN"/>
    <property type="match status" value="1"/>
</dbReference>
<dbReference type="PANTHER" id="PTHR43166:SF30">
    <property type="entry name" value="METHIONINE IMPORT ATP-BINDING PROTEIN METN"/>
    <property type="match status" value="1"/>
</dbReference>
<dbReference type="Pfam" id="PF00005">
    <property type="entry name" value="ABC_tran"/>
    <property type="match status" value="1"/>
</dbReference>
<dbReference type="Pfam" id="PF09383">
    <property type="entry name" value="NIL"/>
    <property type="match status" value="1"/>
</dbReference>
<dbReference type="SMART" id="SM00382">
    <property type="entry name" value="AAA"/>
    <property type="match status" value="1"/>
</dbReference>
<dbReference type="SMART" id="SM00930">
    <property type="entry name" value="NIL"/>
    <property type="match status" value="1"/>
</dbReference>
<dbReference type="SUPFAM" id="SSF55021">
    <property type="entry name" value="ACT-like"/>
    <property type="match status" value="1"/>
</dbReference>
<dbReference type="SUPFAM" id="SSF52540">
    <property type="entry name" value="P-loop containing nucleoside triphosphate hydrolases"/>
    <property type="match status" value="1"/>
</dbReference>
<dbReference type="PROSITE" id="PS00211">
    <property type="entry name" value="ABC_TRANSPORTER_1"/>
    <property type="match status" value="1"/>
</dbReference>
<dbReference type="PROSITE" id="PS50893">
    <property type="entry name" value="ABC_TRANSPORTER_2"/>
    <property type="match status" value="1"/>
</dbReference>
<dbReference type="PROSITE" id="PS51264">
    <property type="entry name" value="METN"/>
    <property type="match status" value="1"/>
</dbReference>
<protein>
    <recommendedName>
        <fullName evidence="1">Methionine import ATP-binding protein MetN</fullName>
        <ecNumber evidence="1">7.4.2.11</ecNumber>
    </recommendedName>
</protein>
<proteinExistence type="inferred from homology"/>
<organism>
    <name type="scientific">Francisella tularensis subsp. tularensis (strain FSC 198)</name>
    <dbReference type="NCBI Taxonomy" id="393115"/>
    <lineage>
        <taxon>Bacteria</taxon>
        <taxon>Pseudomonadati</taxon>
        <taxon>Pseudomonadota</taxon>
        <taxon>Gammaproteobacteria</taxon>
        <taxon>Thiotrichales</taxon>
        <taxon>Francisellaceae</taxon>
        <taxon>Francisella</taxon>
    </lineage>
</organism>
<sequence length="350" mass="39074">MIQIKNLKKEYRTNNTSNLVLDNINLEIKQGEIFGIIGHSGAGKSSLLRCLNLLEQPTDGSIFIADENITKKNSKQLREFRKKVAMIFQHFNLLSSRNVFENIALPLEIQGIPKSEIKKRVFELLDLVELPNKANAYPQELSGGQKQKVAIARALALNPLVLLSDEATSALDPTSTKQILALLKILNKELGLTIVLITHEIDVVRKICDRVAIIDKGRIAEMGKTLDVFLNPQAPVTRSFVETSIHTKVPDFIAKKLQDNPYSYDNTYPVVQLTFYGDKGKMPIIAEISRQFNATASIIQANIETIQDQIVGIAICHITGERQGWENALRFLSNQDVNLKVLGYATADNI</sequence>
<gene>
    <name evidence="1" type="primary">metN</name>
    <name type="ordered locus">FTF1124</name>
</gene>
<reference key="1">
    <citation type="journal article" date="2007" name="PLoS ONE">
        <title>Genome sequencing shows that European isolates of Francisella tularensis subspecies tularensis are almost identical to US laboratory strain Schu S4.</title>
        <authorList>
            <person name="Chaudhuri R.R."/>
            <person name="Ren C.-P."/>
            <person name="Desmond L."/>
            <person name="Vincent G.A."/>
            <person name="Silman N.J."/>
            <person name="Brehm J.K."/>
            <person name="Elmore M.J."/>
            <person name="Hudson M.J."/>
            <person name="Forsman M."/>
            <person name="Isherwood K.E."/>
            <person name="Gurycova D."/>
            <person name="Minton N.P."/>
            <person name="Titball R.W."/>
            <person name="Pallen M.J."/>
            <person name="Vipond R."/>
        </authorList>
    </citation>
    <scope>NUCLEOTIDE SEQUENCE [LARGE SCALE GENOMIC DNA]</scope>
    <source>
        <strain>FSC 198</strain>
    </source>
</reference>